<protein>
    <recommendedName>
        <fullName evidence="1">Tryptophan--tRNA ligase</fullName>
        <ecNumber evidence="1">6.1.1.2</ecNumber>
    </recommendedName>
    <alternativeName>
        <fullName evidence="1">Tryptophanyl-tRNA synthetase</fullName>
        <shortName evidence="1">TrpRS</shortName>
    </alternativeName>
</protein>
<feature type="chain" id="PRO_0000136670" description="Tryptophan--tRNA ligase">
    <location>
        <begin position="1"/>
        <end position="330"/>
    </location>
</feature>
<feature type="short sequence motif" description="'HIGH' region" evidence="1">
    <location>
        <begin position="11"/>
        <end position="19"/>
    </location>
</feature>
<feature type="short sequence motif" description="'KMSKS' region" evidence="1">
    <location>
        <begin position="195"/>
        <end position="199"/>
    </location>
</feature>
<feature type="binding site" evidence="1">
    <location>
        <begin position="10"/>
        <end position="12"/>
    </location>
    <ligand>
        <name>ATP</name>
        <dbReference type="ChEBI" id="CHEBI:30616"/>
    </ligand>
</feature>
<feature type="binding site" evidence="1">
    <location>
        <begin position="18"/>
        <end position="19"/>
    </location>
    <ligand>
        <name>ATP</name>
        <dbReference type="ChEBI" id="CHEBI:30616"/>
    </ligand>
</feature>
<feature type="binding site" evidence="1">
    <location>
        <position position="134"/>
    </location>
    <ligand>
        <name>L-tryptophan</name>
        <dbReference type="ChEBI" id="CHEBI:57912"/>
    </ligand>
</feature>
<feature type="binding site" evidence="1">
    <location>
        <begin position="146"/>
        <end position="148"/>
    </location>
    <ligand>
        <name>ATP</name>
        <dbReference type="ChEBI" id="CHEBI:30616"/>
    </ligand>
</feature>
<feature type="binding site" evidence="1">
    <location>
        <position position="186"/>
    </location>
    <ligand>
        <name>ATP</name>
        <dbReference type="ChEBI" id="CHEBI:30616"/>
    </ligand>
</feature>
<feature type="binding site" evidence="1">
    <location>
        <begin position="195"/>
        <end position="199"/>
    </location>
    <ligand>
        <name>ATP</name>
        <dbReference type="ChEBI" id="CHEBI:30616"/>
    </ligand>
</feature>
<comment type="function">
    <text evidence="1">Catalyzes the attachment of tryptophan to tRNA(Trp).</text>
</comment>
<comment type="catalytic activity">
    <reaction evidence="1">
        <text>tRNA(Trp) + L-tryptophan + ATP = L-tryptophyl-tRNA(Trp) + AMP + diphosphate + H(+)</text>
        <dbReference type="Rhea" id="RHEA:24080"/>
        <dbReference type="Rhea" id="RHEA-COMP:9671"/>
        <dbReference type="Rhea" id="RHEA-COMP:9705"/>
        <dbReference type="ChEBI" id="CHEBI:15378"/>
        <dbReference type="ChEBI" id="CHEBI:30616"/>
        <dbReference type="ChEBI" id="CHEBI:33019"/>
        <dbReference type="ChEBI" id="CHEBI:57912"/>
        <dbReference type="ChEBI" id="CHEBI:78442"/>
        <dbReference type="ChEBI" id="CHEBI:78535"/>
        <dbReference type="ChEBI" id="CHEBI:456215"/>
        <dbReference type="EC" id="6.1.1.2"/>
    </reaction>
</comment>
<comment type="subunit">
    <text evidence="1">Homodimer.</text>
</comment>
<comment type="subcellular location">
    <subcellularLocation>
        <location evidence="1">Cytoplasm</location>
    </subcellularLocation>
</comment>
<comment type="similarity">
    <text evidence="1">Belongs to the class-I aminoacyl-tRNA synthetase family.</text>
</comment>
<dbReference type="EC" id="6.1.1.2" evidence="1"/>
<dbReference type="EMBL" id="AJ235271">
    <property type="protein sequence ID" value="CAA14923.1"/>
    <property type="molecule type" value="Genomic_DNA"/>
</dbReference>
<dbReference type="PIR" id="A71706">
    <property type="entry name" value="A71706"/>
</dbReference>
<dbReference type="RefSeq" id="NP_220847.1">
    <property type="nucleotide sequence ID" value="NC_000963.1"/>
</dbReference>
<dbReference type="RefSeq" id="WP_004597704.1">
    <property type="nucleotide sequence ID" value="NC_000963.1"/>
</dbReference>
<dbReference type="SMR" id="Q9ZD76"/>
<dbReference type="STRING" id="272947.gene:17555548"/>
<dbReference type="EnsemblBacteria" id="CAA14923">
    <property type="protein sequence ID" value="CAA14923"/>
    <property type="gene ID" value="CAA14923"/>
</dbReference>
<dbReference type="GeneID" id="57569593"/>
<dbReference type="KEGG" id="rpr:RP468"/>
<dbReference type="PATRIC" id="fig|272947.5.peg.479"/>
<dbReference type="eggNOG" id="COG0180">
    <property type="taxonomic scope" value="Bacteria"/>
</dbReference>
<dbReference type="HOGENOM" id="CLU_029244_1_4_5"/>
<dbReference type="OrthoDB" id="9801042at2"/>
<dbReference type="Proteomes" id="UP000002480">
    <property type="component" value="Chromosome"/>
</dbReference>
<dbReference type="GO" id="GO:0005737">
    <property type="term" value="C:cytoplasm"/>
    <property type="evidence" value="ECO:0007669"/>
    <property type="project" value="UniProtKB-SubCell"/>
</dbReference>
<dbReference type="GO" id="GO:0005524">
    <property type="term" value="F:ATP binding"/>
    <property type="evidence" value="ECO:0007669"/>
    <property type="project" value="UniProtKB-UniRule"/>
</dbReference>
<dbReference type="GO" id="GO:0004830">
    <property type="term" value="F:tryptophan-tRNA ligase activity"/>
    <property type="evidence" value="ECO:0007669"/>
    <property type="project" value="UniProtKB-UniRule"/>
</dbReference>
<dbReference type="GO" id="GO:0006436">
    <property type="term" value="P:tryptophanyl-tRNA aminoacylation"/>
    <property type="evidence" value="ECO:0007669"/>
    <property type="project" value="UniProtKB-UniRule"/>
</dbReference>
<dbReference type="CDD" id="cd00806">
    <property type="entry name" value="TrpRS_core"/>
    <property type="match status" value="1"/>
</dbReference>
<dbReference type="FunFam" id="1.10.240.10:FF:000002">
    <property type="entry name" value="Tryptophan--tRNA ligase"/>
    <property type="match status" value="1"/>
</dbReference>
<dbReference type="Gene3D" id="3.40.50.620">
    <property type="entry name" value="HUPs"/>
    <property type="match status" value="1"/>
</dbReference>
<dbReference type="Gene3D" id="1.10.240.10">
    <property type="entry name" value="Tyrosyl-Transfer RNA Synthetase"/>
    <property type="match status" value="1"/>
</dbReference>
<dbReference type="HAMAP" id="MF_00140_B">
    <property type="entry name" value="Trp_tRNA_synth_B"/>
    <property type="match status" value="1"/>
</dbReference>
<dbReference type="InterPro" id="IPR002305">
    <property type="entry name" value="aa-tRNA-synth_Ic"/>
</dbReference>
<dbReference type="InterPro" id="IPR014729">
    <property type="entry name" value="Rossmann-like_a/b/a_fold"/>
</dbReference>
<dbReference type="InterPro" id="IPR002306">
    <property type="entry name" value="Trp-tRNA-ligase"/>
</dbReference>
<dbReference type="InterPro" id="IPR024109">
    <property type="entry name" value="Trp-tRNA-ligase_bac-type"/>
</dbReference>
<dbReference type="InterPro" id="IPR050203">
    <property type="entry name" value="Trp-tRNA_synthetase"/>
</dbReference>
<dbReference type="NCBIfam" id="TIGR00233">
    <property type="entry name" value="trpS"/>
    <property type="match status" value="1"/>
</dbReference>
<dbReference type="PANTHER" id="PTHR43766">
    <property type="entry name" value="TRYPTOPHAN--TRNA LIGASE, MITOCHONDRIAL"/>
    <property type="match status" value="1"/>
</dbReference>
<dbReference type="PANTHER" id="PTHR43766:SF1">
    <property type="entry name" value="TRYPTOPHAN--TRNA LIGASE, MITOCHONDRIAL"/>
    <property type="match status" value="1"/>
</dbReference>
<dbReference type="Pfam" id="PF00579">
    <property type="entry name" value="tRNA-synt_1b"/>
    <property type="match status" value="1"/>
</dbReference>
<dbReference type="PRINTS" id="PR01039">
    <property type="entry name" value="TRNASYNTHTRP"/>
</dbReference>
<dbReference type="SUPFAM" id="SSF52374">
    <property type="entry name" value="Nucleotidylyl transferase"/>
    <property type="match status" value="1"/>
</dbReference>
<gene>
    <name evidence="1" type="primary">trpS</name>
    <name type="ordered locus">RP468</name>
</gene>
<keyword id="KW-0030">Aminoacyl-tRNA synthetase</keyword>
<keyword id="KW-0067">ATP-binding</keyword>
<keyword id="KW-0963">Cytoplasm</keyword>
<keyword id="KW-0436">Ligase</keyword>
<keyword id="KW-0547">Nucleotide-binding</keyword>
<keyword id="KW-0648">Protein biosynthesis</keyword>
<keyword id="KW-1185">Reference proteome</keyword>
<name>SYW_RICPR</name>
<proteinExistence type="inferred from homology"/>
<reference key="1">
    <citation type="journal article" date="1998" name="Nature">
        <title>The genome sequence of Rickettsia prowazekii and the origin of mitochondria.</title>
        <authorList>
            <person name="Andersson S.G.E."/>
            <person name="Zomorodipour A."/>
            <person name="Andersson J.O."/>
            <person name="Sicheritz-Ponten T."/>
            <person name="Alsmark U.C.M."/>
            <person name="Podowski R.M."/>
            <person name="Naeslund A.K."/>
            <person name="Eriksson A.-S."/>
            <person name="Winkler H.H."/>
            <person name="Kurland C.G."/>
        </authorList>
    </citation>
    <scope>NUCLEOTIDE SEQUENCE [LARGE SCALE GENOMIC DNA]</scope>
    <source>
        <strain>Madrid E</strain>
    </source>
</reference>
<accession>Q9ZD76</accession>
<evidence type="ECO:0000255" key="1">
    <source>
        <dbReference type="HAMAP-Rule" id="MF_00140"/>
    </source>
</evidence>
<organism>
    <name type="scientific">Rickettsia prowazekii (strain Madrid E)</name>
    <dbReference type="NCBI Taxonomy" id="272947"/>
    <lineage>
        <taxon>Bacteria</taxon>
        <taxon>Pseudomonadati</taxon>
        <taxon>Pseudomonadota</taxon>
        <taxon>Alphaproteobacteria</taxon>
        <taxon>Rickettsiales</taxon>
        <taxon>Rickettsiaceae</taxon>
        <taxon>Rickettsieae</taxon>
        <taxon>Rickettsia</taxon>
        <taxon>typhus group</taxon>
    </lineage>
</organism>
<sequence>MKKTVLSGVQTTGALHLGNYLGSIRNWIKMQEEYNCFFFLADLHAITIDIKTSELNDAIMEVLAIYLAAGLNPDKVTIFAQSMVKEHVELSWLLNCVTPLGWLKRMTQFKDKAGSAQCKACLGLFAYPILMAADILIYKADIVPVGEDQKQHLELTRDIAEVINRRFDKEILKVPDILISETGTRIMSLRNGLKKMSKSDISDFSRINLKDSNDLIHQKIKKAKTDHLSFISYNKKTRPEISNLLDIYKSFSKESIEKIIDNYQNQGFAKFKEDLAEIIITNLQPIRNKCLELMNDKEYLLKILHKGAQKARIRASETVNEVKKQFGFII</sequence>